<name>MNMG_LISW6</name>
<gene>
    <name evidence="1" type="primary">mnmG</name>
    <name evidence="1" type="synonym">gidA</name>
    <name type="ordered locus">lwe2745</name>
</gene>
<accession>A0AMD1</accession>
<keyword id="KW-0963">Cytoplasm</keyword>
<keyword id="KW-0274">FAD</keyword>
<keyword id="KW-0285">Flavoprotein</keyword>
<keyword id="KW-0520">NAD</keyword>
<keyword id="KW-0819">tRNA processing</keyword>
<organism>
    <name type="scientific">Listeria welshimeri serovar 6b (strain ATCC 35897 / DSM 20650 / CCUG 15529 / CIP 8149 / NCTC 11857 / SLCC 5334 / V8)</name>
    <dbReference type="NCBI Taxonomy" id="386043"/>
    <lineage>
        <taxon>Bacteria</taxon>
        <taxon>Bacillati</taxon>
        <taxon>Bacillota</taxon>
        <taxon>Bacilli</taxon>
        <taxon>Bacillales</taxon>
        <taxon>Listeriaceae</taxon>
        <taxon>Listeria</taxon>
    </lineage>
</organism>
<evidence type="ECO:0000255" key="1">
    <source>
        <dbReference type="HAMAP-Rule" id="MF_00129"/>
    </source>
</evidence>
<evidence type="ECO:0000256" key="2">
    <source>
        <dbReference type="SAM" id="MobiDB-lite"/>
    </source>
</evidence>
<dbReference type="EMBL" id="AM263198">
    <property type="protein sequence ID" value="CAK22163.1"/>
    <property type="molecule type" value="Genomic_DNA"/>
</dbReference>
<dbReference type="RefSeq" id="WP_011703434.1">
    <property type="nucleotide sequence ID" value="NC_008555.1"/>
</dbReference>
<dbReference type="SMR" id="A0AMD1"/>
<dbReference type="STRING" id="386043.lwe2745"/>
<dbReference type="GeneID" id="61190667"/>
<dbReference type="KEGG" id="lwe:lwe2745"/>
<dbReference type="eggNOG" id="COG0445">
    <property type="taxonomic scope" value="Bacteria"/>
</dbReference>
<dbReference type="HOGENOM" id="CLU_007831_2_2_9"/>
<dbReference type="OrthoDB" id="9815560at2"/>
<dbReference type="Proteomes" id="UP000000779">
    <property type="component" value="Chromosome"/>
</dbReference>
<dbReference type="GO" id="GO:0005829">
    <property type="term" value="C:cytosol"/>
    <property type="evidence" value="ECO:0007669"/>
    <property type="project" value="TreeGrafter"/>
</dbReference>
<dbReference type="GO" id="GO:0050660">
    <property type="term" value="F:flavin adenine dinucleotide binding"/>
    <property type="evidence" value="ECO:0007669"/>
    <property type="project" value="UniProtKB-UniRule"/>
</dbReference>
<dbReference type="GO" id="GO:0030488">
    <property type="term" value="P:tRNA methylation"/>
    <property type="evidence" value="ECO:0007669"/>
    <property type="project" value="TreeGrafter"/>
</dbReference>
<dbReference type="GO" id="GO:0002098">
    <property type="term" value="P:tRNA wobble uridine modification"/>
    <property type="evidence" value="ECO:0007669"/>
    <property type="project" value="InterPro"/>
</dbReference>
<dbReference type="FunFam" id="1.10.10.1800:FF:000001">
    <property type="entry name" value="tRNA uridine 5-carboxymethylaminomethyl modification enzyme MnmG"/>
    <property type="match status" value="1"/>
</dbReference>
<dbReference type="FunFam" id="1.10.150.570:FF:000001">
    <property type="entry name" value="tRNA uridine 5-carboxymethylaminomethyl modification enzyme MnmG"/>
    <property type="match status" value="1"/>
</dbReference>
<dbReference type="FunFam" id="3.50.50.60:FF:000002">
    <property type="entry name" value="tRNA uridine 5-carboxymethylaminomethyl modification enzyme MnmG"/>
    <property type="match status" value="1"/>
</dbReference>
<dbReference type="FunFam" id="3.50.50.60:FF:000063">
    <property type="entry name" value="tRNA uridine 5-carboxymethylaminomethyl modification enzyme MnmG"/>
    <property type="match status" value="1"/>
</dbReference>
<dbReference type="Gene3D" id="3.50.50.60">
    <property type="entry name" value="FAD/NAD(P)-binding domain"/>
    <property type="match status" value="2"/>
</dbReference>
<dbReference type="Gene3D" id="1.10.150.570">
    <property type="entry name" value="GidA associated domain, C-terminal subdomain"/>
    <property type="match status" value="1"/>
</dbReference>
<dbReference type="Gene3D" id="1.10.10.1800">
    <property type="entry name" value="tRNA uridine 5-carboxymethylaminomethyl modification enzyme MnmG/GidA"/>
    <property type="match status" value="1"/>
</dbReference>
<dbReference type="HAMAP" id="MF_00129">
    <property type="entry name" value="MnmG_GidA"/>
    <property type="match status" value="1"/>
</dbReference>
<dbReference type="InterPro" id="IPR036188">
    <property type="entry name" value="FAD/NAD-bd_sf"/>
</dbReference>
<dbReference type="InterPro" id="IPR049312">
    <property type="entry name" value="GIDA_C_N"/>
</dbReference>
<dbReference type="InterPro" id="IPR004416">
    <property type="entry name" value="MnmG"/>
</dbReference>
<dbReference type="InterPro" id="IPR002218">
    <property type="entry name" value="MnmG-rel"/>
</dbReference>
<dbReference type="InterPro" id="IPR020595">
    <property type="entry name" value="MnmG-rel_CS"/>
</dbReference>
<dbReference type="InterPro" id="IPR026904">
    <property type="entry name" value="MnmG_C"/>
</dbReference>
<dbReference type="InterPro" id="IPR047001">
    <property type="entry name" value="MnmG_C_subdom"/>
</dbReference>
<dbReference type="InterPro" id="IPR044920">
    <property type="entry name" value="MnmG_C_subdom_sf"/>
</dbReference>
<dbReference type="InterPro" id="IPR040131">
    <property type="entry name" value="MnmG_N"/>
</dbReference>
<dbReference type="NCBIfam" id="TIGR00136">
    <property type="entry name" value="mnmG_gidA"/>
    <property type="match status" value="1"/>
</dbReference>
<dbReference type="PANTHER" id="PTHR11806">
    <property type="entry name" value="GLUCOSE INHIBITED DIVISION PROTEIN A"/>
    <property type="match status" value="1"/>
</dbReference>
<dbReference type="PANTHER" id="PTHR11806:SF0">
    <property type="entry name" value="PROTEIN MTO1 HOMOLOG, MITOCHONDRIAL"/>
    <property type="match status" value="1"/>
</dbReference>
<dbReference type="Pfam" id="PF01134">
    <property type="entry name" value="GIDA"/>
    <property type="match status" value="1"/>
</dbReference>
<dbReference type="Pfam" id="PF21680">
    <property type="entry name" value="GIDA_C_1st"/>
    <property type="match status" value="1"/>
</dbReference>
<dbReference type="Pfam" id="PF13932">
    <property type="entry name" value="SAM_GIDA_C"/>
    <property type="match status" value="1"/>
</dbReference>
<dbReference type="PRINTS" id="PR00411">
    <property type="entry name" value="PNDRDTASEI"/>
</dbReference>
<dbReference type="SMART" id="SM01228">
    <property type="entry name" value="GIDA_assoc_3"/>
    <property type="match status" value="1"/>
</dbReference>
<dbReference type="SUPFAM" id="SSF51905">
    <property type="entry name" value="FAD/NAD(P)-binding domain"/>
    <property type="match status" value="1"/>
</dbReference>
<dbReference type="PROSITE" id="PS01280">
    <property type="entry name" value="GIDA_1"/>
    <property type="match status" value="1"/>
</dbReference>
<dbReference type="PROSITE" id="PS01281">
    <property type="entry name" value="GIDA_2"/>
    <property type="match status" value="1"/>
</dbReference>
<reference key="1">
    <citation type="journal article" date="2006" name="J. Bacteriol.">
        <title>Whole-genome sequence of Listeria welshimeri reveals common steps in genome reduction with Listeria innocua as compared to Listeria monocytogenes.</title>
        <authorList>
            <person name="Hain T."/>
            <person name="Steinweg C."/>
            <person name="Kuenne C.T."/>
            <person name="Billion A."/>
            <person name="Ghai R."/>
            <person name="Chatterjee S.S."/>
            <person name="Domann E."/>
            <person name="Kaerst U."/>
            <person name="Goesmann A."/>
            <person name="Bekel T."/>
            <person name="Bartels D."/>
            <person name="Kaiser O."/>
            <person name="Meyer F."/>
            <person name="Puehler A."/>
            <person name="Weisshaar B."/>
            <person name="Wehland J."/>
            <person name="Liang C."/>
            <person name="Dandekar T."/>
            <person name="Lampidis R."/>
            <person name="Kreft J."/>
            <person name="Goebel W."/>
            <person name="Chakraborty T."/>
        </authorList>
    </citation>
    <scope>NUCLEOTIDE SEQUENCE [LARGE SCALE GENOMIC DNA]</scope>
    <source>
        <strain>ATCC 35897 / DSM 20650 / CCUG 15529 / CIP 8149 / NCTC 11857 / SLCC 5334 / V8</strain>
    </source>
</reference>
<protein>
    <recommendedName>
        <fullName evidence="1">tRNA uridine 5-carboxymethylaminomethyl modification enzyme MnmG</fullName>
    </recommendedName>
    <alternativeName>
        <fullName evidence="1">Glucose-inhibited division protein A</fullName>
    </alternativeName>
</protein>
<feature type="chain" id="PRO_1000016619" description="tRNA uridine 5-carboxymethylaminomethyl modification enzyme MnmG">
    <location>
        <begin position="1"/>
        <end position="629"/>
    </location>
</feature>
<feature type="region of interest" description="Disordered" evidence="2">
    <location>
        <begin position="203"/>
        <end position="227"/>
    </location>
</feature>
<feature type="compositionally biased region" description="Basic and acidic residues" evidence="2">
    <location>
        <begin position="215"/>
        <end position="227"/>
    </location>
</feature>
<feature type="binding site" evidence="1">
    <location>
        <begin position="15"/>
        <end position="20"/>
    </location>
    <ligand>
        <name>FAD</name>
        <dbReference type="ChEBI" id="CHEBI:57692"/>
    </ligand>
</feature>
<feature type="binding site" evidence="1">
    <location>
        <position position="127"/>
    </location>
    <ligand>
        <name>FAD</name>
        <dbReference type="ChEBI" id="CHEBI:57692"/>
    </ligand>
</feature>
<feature type="binding site" evidence="1">
    <location>
        <position position="182"/>
    </location>
    <ligand>
        <name>FAD</name>
        <dbReference type="ChEBI" id="CHEBI:57692"/>
    </ligand>
</feature>
<feature type="binding site" evidence="1">
    <location>
        <begin position="274"/>
        <end position="288"/>
    </location>
    <ligand>
        <name>NAD(+)</name>
        <dbReference type="ChEBI" id="CHEBI:57540"/>
    </ligand>
</feature>
<feature type="binding site" evidence="1">
    <location>
        <position position="371"/>
    </location>
    <ligand>
        <name>FAD</name>
        <dbReference type="ChEBI" id="CHEBI:57692"/>
    </ligand>
</feature>
<sequence>MQTYDAGTFDVIVVGAGHAGVEAGLASGRMGAKTLMLTINLDMVAFMPCNPSVGGPAKGVVVREIDALGGEMGRNTDKTYIQMRMLNTGKGPAVRALRAQADKWDYQHEMKHTIEKEENITLRQGLVDHLVIEDGVCKGVITNSGAIYYAKTVVITTGTFSRGEIIVGELRYSSGPNNQQPSVKLSEHLEELGFELRRFKTGTPPRVKSSTIDYSKTEEQPGDDHPRAFSFDTVDMMLDQLPCWLTYTNETTHEIIQANLHRSPMFTATKKGTGARYCPSIEDKIVRFSDKPRHQIFLEPEGKNTEEVYVQGLSTSLPEEVQREMLRTIPGLENVEMMRVGYAIEYDAVMPDQLWPSLETKLVEGLFTAGQINGTSGYEEAAGQGLMAGINAARKVFDKEPIILGRDQAYIGVLIDDLVTKGTEEPYRLLTSRAEYRLLLRHDNADLRLTEIGHEIGLISDERYERFLAKQSAIEAEKERLQKTRIKPTAEVQAMLKEIGSGELKDGILAADLLRRPEITYDKIAQIVSRETFITDEIAEQVEIQVKYEGYIQKSNLQVEKMKRMEDKKIPENIDYDAISGLATEALEKLKKIEPLSIAQASRISGVNPADISILLVYIEQGKIAKISK</sequence>
<comment type="function">
    <text evidence="1">NAD-binding protein involved in the addition of a carboxymethylaminomethyl (cmnm) group at the wobble position (U34) of certain tRNAs, forming tRNA-cmnm(5)s(2)U34.</text>
</comment>
<comment type="cofactor">
    <cofactor evidence="1">
        <name>FAD</name>
        <dbReference type="ChEBI" id="CHEBI:57692"/>
    </cofactor>
</comment>
<comment type="subunit">
    <text evidence="1">Homodimer. Heterotetramer of two MnmE and two MnmG subunits.</text>
</comment>
<comment type="subcellular location">
    <subcellularLocation>
        <location evidence="1">Cytoplasm</location>
    </subcellularLocation>
</comment>
<comment type="similarity">
    <text evidence="1">Belongs to the MnmG family.</text>
</comment>
<proteinExistence type="inferred from homology"/>